<organism>
    <name type="scientific">Oryza sativa subsp. japonica</name>
    <name type="common">Rice</name>
    <dbReference type="NCBI Taxonomy" id="39947"/>
    <lineage>
        <taxon>Eukaryota</taxon>
        <taxon>Viridiplantae</taxon>
        <taxon>Streptophyta</taxon>
        <taxon>Embryophyta</taxon>
        <taxon>Tracheophyta</taxon>
        <taxon>Spermatophyta</taxon>
        <taxon>Magnoliopsida</taxon>
        <taxon>Liliopsida</taxon>
        <taxon>Poales</taxon>
        <taxon>Poaceae</taxon>
        <taxon>BOP clade</taxon>
        <taxon>Oryzoideae</taxon>
        <taxon>Oryzeae</taxon>
        <taxon>Oryzinae</taxon>
        <taxon>Oryza</taxon>
        <taxon>Oryza sativa</taxon>
    </lineage>
</organism>
<keyword id="KW-0560">Oxidoreductase</keyword>
<keyword id="KW-1185">Reference proteome</keyword>
<reference key="1">
    <citation type="journal article" date="2003" name="Science">
        <title>In-depth view of structure, activity, and evolution of rice chromosome 10.</title>
        <authorList>
            <person name="Yu Y."/>
            <person name="Rambo T."/>
            <person name="Currie J."/>
            <person name="Saski C."/>
            <person name="Kim H.-R."/>
            <person name="Collura K."/>
            <person name="Thompson S."/>
            <person name="Simmons J."/>
            <person name="Yang T.-J."/>
            <person name="Nah G."/>
            <person name="Patel A.J."/>
            <person name="Thurmond S."/>
            <person name="Henry D."/>
            <person name="Oates R."/>
            <person name="Palmer M."/>
            <person name="Pries G."/>
            <person name="Gibson J."/>
            <person name="Anderson H."/>
            <person name="Paradkar M."/>
            <person name="Crane L."/>
            <person name="Dale J."/>
            <person name="Carver M.B."/>
            <person name="Wood T."/>
            <person name="Frisch D."/>
            <person name="Engler F."/>
            <person name="Soderlund C."/>
            <person name="Palmer L.E."/>
            <person name="Teytelman L."/>
            <person name="Nascimento L."/>
            <person name="De la Bastide M."/>
            <person name="Spiegel L."/>
            <person name="Ware D."/>
            <person name="O'Shaughnessy A."/>
            <person name="Dike S."/>
            <person name="Dedhia N."/>
            <person name="Preston R."/>
            <person name="Huang E."/>
            <person name="Ferraro K."/>
            <person name="Kuit K."/>
            <person name="Miller B."/>
            <person name="Zutavern T."/>
            <person name="Katzenberger F."/>
            <person name="Muller S."/>
            <person name="Balija V."/>
            <person name="Martienssen R.A."/>
            <person name="Stein L."/>
            <person name="Minx P."/>
            <person name="Johnson D."/>
            <person name="Cordum H."/>
            <person name="Mardis E."/>
            <person name="Cheng Z."/>
            <person name="Jiang J."/>
            <person name="Wilson R."/>
            <person name="McCombie W.R."/>
            <person name="Wing R.A."/>
            <person name="Yuan Q."/>
            <person name="Ouyang S."/>
            <person name="Liu J."/>
            <person name="Jones K.M."/>
            <person name="Gansberger K."/>
            <person name="Moffat K."/>
            <person name="Hill J."/>
            <person name="Tsitrin T."/>
            <person name="Overton L."/>
            <person name="Bera J."/>
            <person name="Kim M."/>
            <person name="Jin S."/>
            <person name="Tallon L."/>
            <person name="Ciecko A."/>
            <person name="Pai G."/>
            <person name="Van Aken S."/>
            <person name="Utterback T."/>
            <person name="Reidmuller S."/>
            <person name="Bormann J."/>
            <person name="Feldblyum T."/>
            <person name="Hsiao J."/>
            <person name="Zismann V."/>
            <person name="Blunt S."/>
            <person name="de Vazeille A.R."/>
            <person name="Shaffer T."/>
            <person name="Koo H."/>
            <person name="Suh B."/>
            <person name="Yang Q."/>
            <person name="Haas B."/>
            <person name="Peterson J."/>
            <person name="Pertea M."/>
            <person name="Volfovsky N."/>
            <person name="Wortman J."/>
            <person name="White O."/>
            <person name="Salzberg S.L."/>
            <person name="Fraser C.M."/>
            <person name="Buell C.R."/>
            <person name="Messing J."/>
            <person name="Song R."/>
            <person name="Fuks G."/>
            <person name="Llaca V."/>
            <person name="Kovchak S."/>
            <person name="Young S."/>
            <person name="Bowers J.E."/>
            <person name="Paterson A.H."/>
            <person name="Johns M.A."/>
            <person name="Mao L."/>
            <person name="Pan H."/>
            <person name="Dean R.A."/>
        </authorList>
    </citation>
    <scope>NUCLEOTIDE SEQUENCE [LARGE SCALE GENOMIC DNA]</scope>
    <source>
        <strain>cv. Nipponbare</strain>
    </source>
</reference>
<reference key="2">
    <citation type="journal article" date="2005" name="Nature">
        <title>The map-based sequence of the rice genome.</title>
        <authorList>
            <consortium name="International rice genome sequencing project (IRGSP)"/>
        </authorList>
    </citation>
    <scope>NUCLEOTIDE SEQUENCE [LARGE SCALE GENOMIC DNA]</scope>
    <source>
        <strain>cv. Nipponbare</strain>
    </source>
</reference>
<reference key="3">
    <citation type="journal article" date="2008" name="Nucleic Acids Res.">
        <title>The rice annotation project database (RAP-DB): 2008 update.</title>
        <authorList>
            <consortium name="The rice annotation project (RAP)"/>
        </authorList>
    </citation>
    <scope>GENOME REANNOTATION</scope>
    <source>
        <strain>cv. Nipponbare</strain>
    </source>
</reference>
<reference key="4">
    <citation type="journal article" date="2013" name="Rice">
        <title>Improvement of the Oryza sativa Nipponbare reference genome using next generation sequence and optical map data.</title>
        <authorList>
            <person name="Kawahara Y."/>
            <person name="de la Bastide M."/>
            <person name="Hamilton J.P."/>
            <person name="Kanamori H."/>
            <person name="McCombie W.R."/>
            <person name="Ouyang S."/>
            <person name="Schwartz D.C."/>
            <person name="Tanaka T."/>
            <person name="Wu J."/>
            <person name="Zhou S."/>
            <person name="Childs K.L."/>
            <person name="Davidson R.M."/>
            <person name="Lin H."/>
            <person name="Quesada-Ocampo L."/>
            <person name="Vaillancourt B."/>
            <person name="Sakai H."/>
            <person name="Lee S.S."/>
            <person name="Kim J."/>
            <person name="Numa H."/>
            <person name="Itoh T."/>
            <person name="Buell C.R."/>
            <person name="Matsumoto T."/>
        </authorList>
    </citation>
    <scope>GENOME REANNOTATION</scope>
    <source>
        <strain>cv. Nipponbare</strain>
    </source>
</reference>
<reference key="5">
    <citation type="journal article" date="2005" name="PLoS Biol.">
        <title>The genomes of Oryza sativa: a history of duplications.</title>
        <authorList>
            <person name="Yu J."/>
            <person name="Wang J."/>
            <person name="Lin W."/>
            <person name="Li S."/>
            <person name="Li H."/>
            <person name="Zhou J."/>
            <person name="Ni P."/>
            <person name="Dong W."/>
            <person name="Hu S."/>
            <person name="Zeng C."/>
            <person name="Zhang J."/>
            <person name="Zhang Y."/>
            <person name="Li R."/>
            <person name="Xu Z."/>
            <person name="Li S."/>
            <person name="Li X."/>
            <person name="Zheng H."/>
            <person name="Cong L."/>
            <person name="Lin L."/>
            <person name="Yin J."/>
            <person name="Geng J."/>
            <person name="Li G."/>
            <person name="Shi J."/>
            <person name="Liu J."/>
            <person name="Lv H."/>
            <person name="Li J."/>
            <person name="Wang J."/>
            <person name="Deng Y."/>
            <person name="Ran L."/>
            <person name="Shi X."/>
            <person name="Wang X."/>
            <person name="Wu Q."/>
            <person name="Li C."/>
            <person name="Ren X."/>
            <person name="Wang J."/>
            <person name="Wang X."/>
            <person name="Li D."/>
            <person name="Liu D."/>
            <person name="Zhang X."/>
            <person name="Ji Z."/>
            <person name="Zhao W."/>
            <person name="Sun Y."/>
            <person name="Zhang Z."/>
            <person name="Bao J."/>
            <person name="Han Y."/>
            <person name="Dong L."/>
            <person name="Ji J."/>
            <person name="Chen P."/>
            <person name="Wu S."/>
            <person name="Liu J."/>
            <person name="Xiao Y."/>
            <person name="Bu D."/>
            <person name="Tan J."/>
            <person name="Yang L."/>
            <person name="Ye C."/>
            <person name="Zhang J."/>
            <person name="Xu J."/>
            <person name="Zhou Y."/>
            <person name="Yu Y."/>
            <person name="Zhang B."/>
            <person name="Zhuang S."/>
            <person name="Wei H."/>
            <person name="Liu B."/>
            <person name="Lei M."/>
            <person name="Yu H."/>
            <person name="Li Y."/>
            <person name="Xu H."/>
            <person name="Wei S."/>
            <person name="He X."/>
            <person name="Fang L."/>
            <person name="Zhang Z."/>
            <person name="Zhang Y."/>
            <person name="Huang X."/>
            <person name="Su Z."/>
            <person name="Tong W."/>
            <person name="Li J."/>
            <person name="Tong Z."/>
            <person name="Li S."/>
            <person name="Ye J."/>
            <person name="Wang L."/>
            <person name="Fang L."/>
            <person name="Lei T."/>
            <person name="Chen C.-S."/>
            <person name="Chen H.-C."/>
            <person name="Xu Z."/>
            <person name="Li H."/>
            <person name="Huang H."/>
            <person name="Zhang F."/>
            <person name="Xu H."/>
            <person name="Li N."/>
            <person name="Zhao C."/>
            <person name="Li S."/>
            <person name="Dong L."/>
            <person name="Huang Y."/>
            <person name="Li L."/>
            <person name="Xi Y."/>
            <person name="Qi Q."/>
            <person name="Li W."/>
            <person name="Zhang B."/>
            <person name="Hu W."/>
            <person name="Zhang Y."/>
            <person name="Tian X."/>
            <person name="Jiao Y."/>
            <person name="Liang X."/>
            <person name="Jin J."/>
            <person name="Gao L."/>
            <person name="Zheng W."/>
            <person name="Hao B."/>
            <person name="Liu S.-M."/>
            <person name="Wang W."/>
            <person name="Yuan L."/>
            <person name="Cao M."/>
            <person name="McDermott J."/>
            <person name="Samudrala R."/>
            <person name="Wang J."/>
            <person name="Wong G.K.-S."/>
            <person name="Yang H."/>
        </authorList>
    </citation>
    <scope>NUCLEOTIDE SEQUENCE [LARGE SCALE GENOMIC DNA]</scope>
    <source>
        <strain>cv. Nipponbare</strain>
    </source>
</reference>
<reference key="6">
    <citation type="journal article" date="2003" name="Science">
        <title>Collection, mapping, and annotation of over 28,000 cDNA clones from japonica rice.</title>
        <authorList>
            <consortium name="The rice full-length cDNA consortium"/>
        </authorList>
    </citation>
    <scope>NUCLEOTIDE SEQUENCE [LARGE SCALE MRNA]</scope>
    <source>
        <strain>cv. Nipponbare</strain>
    </source>
</reference>
<reference key="7">
    <citation type="journal article" date="2007" name="New Phytol.">
        <title>A CDC25 homologue from rice functions as an arsenate reductase.</title>
        <authorList>
            <person name="Duan G.L."/>
            <person name="Zhou Y."/>
            <person name="Tong Y.P."/>
            <person name="Mukhopadhyay R."/>
            <person name="Rosen B.P."/>
            <person name="Zhu Y.G."/>
        </authorList>
    </citation>
    <scope>NUCLEOTIDE SEQUENCE [MRNA] OF 3-160</scope>
    <scope>FUNCTION</scope>
    <scope>CATALYTIC ACTIVITY</scope>
    <scope>BIOPHYSICOCHEMICAL PROPERTIES</scope>
    <scope>INDUCTION</scope>
    <scope>MUTAGENESIS OF CYS-94</scope>
    <source>
        <tissue>Root</tissue>
    </source>
</reference>
<reference key="8">
    <citation type="journal article" date="2011" name="Plant Physiol. Biochem.">
        <title>Characterization of the sulfurtransferase family from Oryza sativa L.</title>
        <authorList>
            <person name="Guretzki S."/>
            <person name="Papenbrock J."/>
        </authorList>
    </citation>
    <scope>GENE FAMILY</scope>
    <scope>NOMENCLATURE</scope>
</reference>
<sequence length="160" mass="17705">MCRFLISTPFSRRRGERKAEAGRMARSVSYVSAAKLLAMARSNPRVAIIDVRDEERSYQAHIGGSHHFSSRSFAARLPELARATGDKDTVVFHCALSKVRGPSCAKMFSDYLSETKEESGTKNIMVLERGFNGWELSGQPVCRCTDAPCKGTCSPEEPEL</sequence>
<evidence type="ECO:0000255" key="1">
    <source>
        <dbReference type="PROSITE-ProRule" id="PRU00173"/>
    </source>
</evidence>
<evidence type="ECO:0000269" key="2">
    <source>
    </source>
</evidence>
<evidence type="ECO:0000305" key="3"/>
<gene>
    <name type="primary">ACR2.1</name>
    <name type="synonym">CDC25.1</name>
    <name type="synonym">STR20</name>
    <name type="ordered locus">Os10g0545700</name>
    <name type="ordered locus">LOC_Os10g39860</name>
    <name type="ORF">OsJ_32347</name>
    <name type="ORF">OSJNBa0001O14.6</name>
</gene>
<proteinExistence type="evidence at protein level"/>
<comment type="function">
    <text evidence="2">Possesses arsenate reductase activity in vitro. Catalyzes the reduction of arsenate [As(V)] to arsenite [As(III)]. May play a role in arsenic retention in roots.</text>
</comment>
<comment type="function">
    <text evidence="2">Possesses phosphatase activity towards p-nitrophenyl phosphate in vitro.</text>
</comment>
<comment type="catalytic activity">
    <reaction evidence="2">
        <text>[glutaredoxin]-dithiol + arsenate + glutathione + H(+) = glutathionyl-S-S-[glutaredoxin] + arsenite + H2O</text>
        <dbReference type="Rhea" id="RHEA:22016"/>
        <dbReference type="Rhea" id="RHEA-COMP:10729"/>
        <dbReference type="Rhea" id="RHEA-COMP:17668"/>
        <dbReference type="ChEBI" id="CHEBI:15377"/>
        <dbReference type="ChEBI" id="CHEBI:15378"/>
        <dbReference type="ChEBI" id="CHEBI:29242"/>
        <dbReference type="ChEBI" id="CHEBI:29950"/>
        <dbReference type="ChEBI" id="CHEBI:48597"/>
        <dbReference type="ChEBI" id="CHEBI:57925"/>
        <dbReference type="ChEBI" id="CHEBI:146199"/>
        <dbReference type="EC" id="1.20.4.1"/>
    </reaction>
</comment>
<comment type="biophysicochemical properties">
    <kinetics>
        <KM evidence="2">12.2 mM for arsenate</KM>
        <Vmax evidence="2">117.0 nmol/min/mg enzyme towards arsenate</Vmax>
    </kinetics>
</comment>
<comment type="induction">
    <text evidence="2">By arsenate.</text>
</comment>
<comment type="sequence caution" evidence="3">
    <conflict type="erroneous initiation">
        <sequence resource="EMBL-CDS" id="AAK20061"/>
    </conflict>
    <text>Truncated N-terminus.</text>
</comment>
<comment type="sequence caution" evidence="3">
    <conflict type="erroneous initiation">
        <sequence resource="EMBL-CDS" id="AAX54896"/>
    </conflict>
    <text>Truncated N-terminus.</text>
</comment>
<comment type="sequence caution" evidence="3">
    <conflict type="erroneous initiation">
        <sequence resource="EMBL-CDS" id="EEE51343"/>
    </conflict>
    <text>Truncated N-terminus.</text>
</comment>
<name>ACR21_ORYSJ</name>
<feature type="chain" id="PRO_0000416540" description="Arsenate reductase 2.1">
    <location>
        <begin position="1"/>
        <end position="160"/>
    </location>
</feature>
<feature type="domain" description="Rhodanese" evidence="1">
    <location>
        <begin position="42"/>
        <end position="143"/>
    </location>
</feature>
<feature type="active site" description="Cysteine persulfide intermediate" evidence="1">
    <location>
        <position position="94"/>
    </location>
</feature>
<feature type="mutagenesis site" description="Loss of phosphatase activity. Decreases arsenate reductase catalytic efficiency 14-fold." evidence="2">
    <original>C</original>
    <variation>S</variation>
    <location>
        <position position="94"/>
    </location>
</feature>
<protein>
    <recommendedName>
        <fullName>Arsenate reductase 2.1</fullName>
        <shortName>OsACR2.1</shortName>
        <ecNumber>1.20.4.1</ecNumber>
    </recommendedName>
    <alternativeName>
        <fullName>Dual specificity phosphatase CDC25.1</fullName>
    </alternativeName>
    <alternativeName>
        <fullName>Sulfurtransferase 20</fullName>
        <shortName>OsStr20</shortName>
    </alternativeName>
</protein>
<dbReference type="EC" id="1.20.4.1"/>
<dbReference type="EMBL" id="AC025783">
    <property type="protein sequence ID" value="AAK20061.1"/>
    <property type="status" value="ALT_INIT"/>
    <property type="molecule type" value="Genomic_DNA"/>
</dbReference>
<dbReference type="EMBL" id="DP000086">
    <property type="protein sequence ID" value="ABB47952.1"/>
    <property type="molecule type" value="Genomic_DNA"/>
</dbReference>
<dbReference type="EMBL" id="AP008216">
    <property type="protein sequence ID" value="BAF27125.1"/>
    <property type="molecule type" value="Genomic_DNA"/>
</dbReference>
<dbReference type="EMBL" id="AP014966">
    <property type="protein sequence ID" value="BAT11901.1"/>
    <property type="molecule type" value="Genomic_DNA"/>
</dbReference>
<dbReference type="EMBL" id="CM000147">
    <property type="protein sequence ID" value="EEE51343.1"/>
    <property type="status" value="ALT_INIT"/>
    <property type="molecule type" value="Genomic_DNA"/>
</dbReference>
<dbReference type="EMBL" id="AK074009">
    <property type="protein sequence ID" value="BAG93758.1"/>
    <property type="molecule type" value="mRNA"/>
</dbReference>
<dbReference type="EMBL" id="AK104025">
    <property type="protein sequence ID" value="BAG96379.1"/>
    <property type="molecule type" value="mRNA"/>
</dbReference>
<dbReference type="EMBL" id="AY860059">
    <property type="protein sequence ID" value="AAX54896.1"/>
    <property type="status" value="ALT_INIT"/>
    <property type="molecule type" value="mRNA"/>
</dbReference>
<dbReference type="RefSeq" id="XP_015612765.1">
    <property type="nucleotide sequence ID" value="XM_015757279.1"/>
</dbReference>
<dbReference type="SMR" id="Q336V5"/>
<dbReference type="FunCoup" id="Q336V5">
    <property type="interactions" value="407"/>
</dbReference>
<dbReference type="STRING" id="39947.Q336V5"/>
<dbReference type="PaxDb" id="39947-Q336V5"/>
<dbReference type="EnsemblPlants" id="Os10t0545700-02">
    <property type="protein sequence ID" value="Os10t0545700-02"/>
    <property type="gene ID" value="Os10g0545700"/>
</dbReference>
<dbReference type="EnsemblPlants" id="Os10t0545700-03">
    <property type="protein sequence ID" value="Os10t0545700-03"/>
    <property type="gene ID" value="Os10g0545700"/>
</dbReference>
<dbReference type="Gramene" id="Os10t0545700-02">
    <property type="protein sequence ID" value="Os10t0545700-02"/>
    <property type="gene ID" value="Os10g0545700"/>
</dbReference>
<dbReference type="Gramene" id="Os10t0545700-03">
    <property type="protein sequence ID" value="Os10t0545700-03"/>
    <property type="gene ID" value="Os10g0545700"/>
</dbReference>
<dbReference type="KEGG" id="dosa:Os10g0545700"/>
<dbReference type="eggNOG" id="KOG3772">
    <property type="taxonomic scope" value="Eukaryota"/>
</dbReference>
<dbReference type="HOGENOM" id="CLU_107716_2_0_1"/>
<dbReference type="InParanoid" id="Q336V5"/>
<dbReference type="OMA" id="RCTNIPC"/>
<dbReference type="OrthoDB" id="102559at2759"/>
<dbReference type="BRENDA" id="1.20.99.1">
    <property type="organism ID" value="4460"/>
</dbReference>
<dbReference type="SABIO-RK" id="Q336V5"/>
<dbReference type="Proteomes" id="UP000000763">
    <property type="component" value="Chromosome 10"/>
</dbReference>
<dbReference type="Proteomes" id="UP000007752">
    <property type="component" value="Chromosome 10"/>
</dbReference>
<dbReference type="Proteomes" id="UP000059680">
    <property type="component" value="Chromosome 10"/>
</dbReference>
<dbReference type="ExpressionAtlas" id="Q336V5">
    <property type="expression patterns" value="baseline and differential"/>
</dbReference>
<dbReference type="GO" id="GO:0005737">
    <property type="term" value="C:cytoplasm"/>
    <property type="evidence" value="ECO:0000318"/>
    <property type="project" value="GO_Central"/>
</dbReference>
<dbReference type="GO" id="GO:0005634">
    <property type="term" value="C:nucleus"/>
    <property type="evidence" value="ECO:0000318"/>
    <property type="project" value="GO_Central"/>
</dbReference>
<dbReference type="GO" id="GO:0008794">
    <property type="term" value="F:arsenate reductase (glutaredoxin) activity"/>
    <property type="evidence" value="ECO:0000314"/>
    <property type="project" value="UniProtKB"/>
</dbReference>
<dbReference type="GO" id="GO:0016791">
    <property type="term" value="F:phosphatase activity"/>
    <property type="evidence" value="ECO:0000314"/>
    <property type="project" value="UniProtKB"/>
</dbReference>
<dbReference type="GO" id="GO:0004725">
    <property type="term" value="F:protein tyrosine phosphatase activity"/>
    <property type="evidence" value="ECO:0000318"/>
    <property type="project" value="GO_Central"/>
</dbReference>
<dbReference type="FunFam" id="3.40.250.10:FF:000037">
    <property type="entry name" value="Dual-specificity phosphatase CDC25"/>
    <property type="match status" value="1"/>
</dbReference>
<dbReference type="Gene3D" id="3.40.250.10">
    <property type="entry name" value="Rhodanese-like domain"/>
    <property type="match status" value="1"/>
</dbReference>
<dbReference type="InterPro" id="IPR001763">
    <property type="entry name" value="Rhodanese-like_dom"/>
</dbReference>
<dbReference type="InterPro" id="IPR036873">
    <property type="entry name" value="Rhodanese-like_dom_sf"/>
</dbReference>
<dbReference type="PANTHER" id="PTHR10828:SF67">
    <property type="entry name" value="ARSENATE REDUCTASE 2.1"/>
    <property type="match status" value="1"/>
</dbReference>
<dbReference type="PANTHER" id="PTHR10828">
    <property type="entry name" value="M-PHASE INDUCER PHOSPHATASE DUAL SPECIFICITY PHOSPHATASE CDC25"/>
    <property type="match status" value="1"/>
</dbReference>
<dbReference type="Pfam" id="PF00581">
    <property type="entry name" value="Rhodanese"/>
    <property type="match status" value="1"/>
</dbReference>
<dbReference type="SMART" id="SM00450">
    <property type="entry name" value="RHOD"/>
    <property type="match status" value="1"/>
</dbReference>
<dbReference type="SUPFAM" id="SSF52821">
    <property type="entry name" value="Rhodanese/Cell cycle control phosphatase"/>
    <property type="match status" value="1"/>
</dbReference>
<dbReference type="PROSITE" id="PS50206">
    <property type="entry name" value="RHODANESE_3"/>
    <property type="match status" value="1"/>
</dbReference>
<accession>Q336V5</accession>
<accession>A0A0P0XWU2</accession>
<accession>Q9AV34</accession>